<accession>Q7V304</accession>
<organism>
    <name type="scientific">Prochlorococcus marinus subsp. pastoris (strain CCMP1986 / NIES-2087 / MED4)</name>
    <dbReference type="NCBI Taxonomy" id="59919"/>
    <lineage>
        <taxon>Bacteria</taxon>
        <taxon>Bacillati</taxon>
        <taxon>Cyanobacteriota</taxon>
        <taxon>Cyanophyceae</taxon>
        <taxon>Synechococcales</taxon>
        <taxon>Prochlorococcaceae</taxon>
        <taxon>Prochlorococcus</taxon>
    </lineage>
</organism>
<gene>
    <name evidence="1" type="primary">ndhJ</name>
    <name type="ordered locus">PMM0292</name>
</gene>
<sequence>MENNSSPESSEEIVKQNGIVSNQLSQDGITNESLGNDHIGVEILSVKPEKLYEAISTLRGYGFNYLQCQGGYDEGPGKCLVSFYHLISLGDIQDIKEIKEIRVKVFLNRDSDLSVPSLYKIFKGSDWQERETYDMFGINFADHPNPTRLLMPEDWRGWPLRKDYIQPDFYELQDAY</sequence>
<protein>
    <recommendedName>
        <fullName evidence="1">NAD(P)H-quinone oxidoreductase subunit J</fullName>
        <ecNumber evidence="1">7.1.1.-</ecNumber>
    </recommendedName>
    <alternativeName>
        <fullName>NAD(P)H dehydrogenase subunit J</fullName>
    </alternativeName>
    <alternativeName>
        <fullName evidence="1">NADH-plastoquinone oxidoreductase subunit J</fullName>
    </alternativeName>
    <alternativeName>
        <fullName evidence="1">NDH-1 subunit J</fullName>
        <shortName evidence="1">NDH-J</shortName>
    </alternativeName>
</protein>
<keyword id="KW-0472">Membrane</keyword>
<keyword id="KW-0520">NAD</keyword>
<keyword id="KW-0521">NADP</keyword>
<keyword id="KW-0618">Plastoquinone</keyword>
<keyword id="KW-0874">Quinone</keyword>
<keyword id="KW-0793">Thylakoid</keyword>
<keyword id="KW-1278">Translocase</keyword>
<keyword id="KW-0813">Transport</keyword>
<dbReference type="EC" id="7.1.1.-" evidence="1"/>
<dbReference type="EMBL" id="BX548174">
    <property type="protein sequence ID" value="CAE18751.1"/>
    <property type="molecule type" value="Genomic_DNA"/>
</dbReference>
<dbReference type="RefSeq" id="WP_011131929.1">
    <property type="nucleotide sequence ID" value="NC_005072.1"/>
</dbReference>
<dbReference type="SMR" id="Q7V304"/>
<dbReference type="STRING" id="59919.PMM0292"/>
<dbReference type="KEGG" id="pmm:PMM0292"/>
<dbReference type="eggNOG" id="COG0852">
    <property type="taxonomic scope" value="Bacteria"/>
</dbReference>
<dbReference type="HOGENOM" id="CLU_042628_9_1_3"/>
<dbReference type="OrthoDB" id="9803286at2"/>
<dbReference type="Proteomes" id="UP000001026">
    <property type="component" value="Chromosome"/>
</dbReference>
<dbReference type="GO" id="GO:0031676">
    <property type="term" value="C:plasma membrane-derived thylakoid membrane"/>
    <property type="evidence" value="ECO:0007669"/>
    <property type="project" value="UniProtKB-SubCell"/>
</dbReference>
<dbReference type="GO" id="GO:0008137">
    <property type="term" value="F:NADH dehydrogenase (ubiquinone) activity"/>
    <property type="evidence" value="ECO:0007669"/>
    <property type="project" value="InterPro"/>
</dbReference>
<dbReference type="GO" id="GO:0048038">
    <property type="term" value="F:quinone binding"/>
    <property type="evidence" value="ECO:0007669"/>
    <property type="project" value="UniProtKB-KW"/>
</dbReference>
<dbReference type="GO" id="GO:0019684">
    <property type="term" value="P:photosynthesis, light reaction"/>
    <property type="evidence" value="ECO:0007669"/>
    <property type="project" value="UniProtKB-UniRule"/>
</dbReference>
<dbReference type="Gene3D" id="3.30.460.80">
    <property type="entry name" value="NADH:ubiquinone oxidoreductase, 30kDa subunit"/>
    <property type="match status" value="1"/>
</dbReference>
<dbReference type="HAMAP" id="MF_01357">
    <property type="entry name" value="NDH1_NuoC"/>
    <property type="match status" value="1"/>
</dbReference>
<dbReference type="InterPro" id="IPR010218">
    <property type="entry name" value="NADH_DH_suC"/>
</dbReference>
<dbReference type="InterPro" id="IPR037232">
    <property type="entry name" value="NADH_quin_OxRdtase_su_C/D-like"/>
</dbReference>
<dbReference type="InterPro" id="IPR001268">
    <property type="entry name" value="NADH_UbQ_OxRdtase_30kDa_su"/>
</dbReference>
<dbReference type="NCBIfam" id="NF009141">
    <property type="entry name" value="PRK12494.1"/>
    <property type="match status" value="1"/>
</dbReference>
<dbReference type="PANTHER" id="PTHR10884:SF14">
    <property type="entry name" value="NADH DEHYDROGENASE [UBIQUINONE] IRON-SULFUR PROTEIN 3, MITOCHONDRIAL"/>
    <property type="match status" value="1"/>
</dbReference>
<dbReference type="PANTHER" id="PTHR10884">
    <property type="entry name" value="NADH DEHYDROGENASE UBIQUINONE IRON-SULFUR PROTEIN 3"/>
    <property type="match status" value="1"/>
</dbReference>
<dbReference type="Pfam" id="PF00329">
    <property type="entry name" value="Complex1_30kDa"/>
    <property type="match status" value="1"/>
</dbReference>
<dbReference type="SUPFAM" id="SSF143243">
    <property type="entry name" value="Nqo5-like"/>
    <property type="match status" value="1"/>
</dbReference>
<evidence type="ECO:0000255" key="1">
    <source>
        <dbReference type="HAMAP-Rule" id="MF_01357"/>
    </source>
</evidence>
<reference key="1">
    <citation type="journal article" date="2003" name="Nature">
        <title>Genome divergence in two Prochlorococcus ecotypes reflects oceanic niche differentiation.</title>
        <authorList>
            <person name="Rocap G."/>
            <person name="Larimer F.W."/>
            <person name="Lamerdin J.E."/>
            <person name="Malfatti S."/>
            <person name="Chain P."/>
            <person name="Ahlgren N.A."/>
            <person name="Arellano A."/>
            <person name="Coleman M."/>
            <person name="Hauser L."/>
            <person name="Hess W.R."/>
            <person name="Johnson Z.I."/>
            <person name="Land M.L."/>
            <person name="Lindell D."/>
            <person name="Post A.F."/>
            <person name="Regala W."/>
            <person name="Shah M."/>
            <person name="Shaw S.L."/>
            <person name="Steglich C."/>
            <person name="Sullivan M.B."/>
            <person name="Ting C.S."/>
            <person name="Tolonen A."/>
            <person name="Webb E.A."/>
            <person name="Zinser E.R."/>
            <person name="Chisholm S.W."/>
        </authorList>
    </citation>
    <scope>NUCLEOTIDE SEQUENCE [LARGE SCALE GENOMIC DNA]</scope>
    <source>
        <strain>CCMP1986 / NIES-2087 / MED4</strain>
    </source>
</reference>
<feature type="chain" id="PRO_0000358172" description="NAD(P)H-quinone oxidoreductase subunit J">
    <location>
        <begin position="1"/>
        <end position="176"/>
    </location>
</feature>
<name>NDHJ_PROMP</name>
<comment type="function">
    <text evidence="1">NDH-1 shuttles electrons from an unknown electron donor, via FMN and iron-sulfur (Fe-S) centers, to quinones in the respiratory and/or the photosynthetic chain. The immediate electron acceptor for the enzyme in this species is believed to be plastoquinone. Couples the redox reaction to proton translocation, and thus conserves the redox energy in a proton gradient. Cyanobacterial NDH-1 also plays a role in inorganic carbon-concentration.</text>
</comment>
<comment type="catalytic activity">
    <reaction evidence="1">
        <text>a plastoquinone + NADH + (n+1) H(+)(in) = a plastoquinol + NAD(+) + n H(+)(out)</text>
        <dbReference type="Rhea" id="RHEA:42608"/>
        <dbReference type="Rhea" id="RHEA-COMP:9561"/>
        <dbReference type="Rhea" id="RHEA-COMP:9562"/>
        <dbReference type="ChEBI" id="CHEBI:15378"/>
        <dbReference type="ChEBI" id="CHEBI:17757"/>
        <dbReference type="ChEBI" id="CHEBI:57540"/>
        <dbReference type="ChEBI" id="CHEBI:57945"/>
        <dbReference type="ChEBI" id="CHEBI:62192"/>
    </reaction>
</comment>
<comment type="catalytic activity">
    <reaction evidence="1">
        <text>a plastoquinone + NADPH + (n+1) H(+)(in) = a plastoquinol + NADP(+) + n H(+)(out)</text>
        <dbReference type="Rhea" id="RHEA:42612"/>
        <dbReference type="Rhea" id="RHEA-COMP:9561"/>
        <dbReference type="Rhea" id="RHEA-COMP:9562"/>
        <dbReference type="ChEBI" id="CHEBI:15378"/>
        <dbReference type="ChEBI" id="CHEBI:17757"/>
        <dbReference type="ChEBI" id="CHEBI:57783"/>
        <dbReference type="ChEBI" id="CHEBI:58349"/>
        <dbReference type="ChEBI" id="CHEBI:62192"/>
    </reaction>
</comment>
<comment type="subunit">
    <text evidence="1">NDH-1 can be composed of about 15 different subunits; different subcomplexes with different compositions have been identified which probably have different functions.</text>
</comment>
<comment type="subcellular location">
    <subcellularLocation>
        <location evidence="1">Cellular thylakoid membrane</location>
        <topology evidence="1">Peripheral membrane protein</topology>
        <orientation evidence="1">Cytoplasmic side</orientation>
    </subcellularLocation>
</comment>
<comment type="similarity">
    <text evidence="1">Belongs to the complex I 30 kDa subunit family.</text>
</comment>
<proteinExistence type="inferred from homology"/>